<gene>
    <name type="primary">TSPAN17</name>
</gene>
<feature type="chain" id="PRO_0000287714" description="Tetraspanin-17">
    <location>
        <begin position="1"/>
        <end position="270"/>
    </location>
</feature>
<feature type="topological domain" description="Cytoplasmic" evidence="4">
    <location>
        <begin position="1"/>
        <end position="19"/>
    </location>
</feature>
<feature type="transmembrane region" description="Helical" evidence="4">
    <location>
        <begin position="20"/>
        <end position="40"/>
    </location>
</feature>
<feature type="topological domain" description="Extracellular" evidence="4">
    <location>
        <begin position="41"/>
        <end position="63"/>
    </location>
</feature>
<feature type="transmembrane region" description="Helical" evidence="4">
    <location>
        <begin position="64"/>
        <end position="84"/>
    </location>
</feature>
<feature type="topological domain" description="Cytoplasmic" evidence="4">
    <location>
        <begin position="85"/>
        <end position="94"/>
    </location>
</feature>
<feature type="transmembrane region" description="Helical" evidence="4">
    <location>
        <begin position="95"/>
        <end position="115"/>
    </location>
</feature>
<feature type="topological domain" description="Extracellular" evidence="4">
    <location>
        <begin position="116"/>
        <end position="234"/>
    </location>
</feature>
<feature type="transmembrane region" description="Helical" evidence="4">
    <location>
        <begin position="235"/>
        <end position="255"/>
    </location>
</feature>
<feature type="topological domain" description="Cytoplasmic" evidence="4">
    <location>
        <begin position="256"/>
        <end position="270"/>
    </location>
</feature>
<feature type="glycosylation site" description="N-linked (GlcNAc...) asparagine" evidence="4">
    <location>
        <position position="51"/>
    </location>
</feature>
<feature type="glycosylation site" description="N-linked (GlcNAc...) asparagine" evidence="4">
    <location>
        <position position="171"/>
    </location>
</feature>
<feature type="disulfide bond" evidence="1">
    <location>
        <begin position="155"/>
        <end position="223"/>
    </location>
</feature>
<feature type="disulfide bond" evidence="1">
    <location>
        <begin position="156"/>
        <end position="188"/>
    </location>
</feature>
<feature type="disulfide bond" evidence="1">
    <location>
        <begin position="172"/>
        <end position="182"/>
    </location>
</feature>
<feature type="disulfide bond" evidence="1">
    <location>
        <begin position="189"/>
        <end position="202"/>
    </location>
</feature>
<dbReference type="EMBL" id="BT021564">
    <property type="protein sequence ID" value="AAX46411.1"/>
    <property type="molecule type" value="mRNA"/>
</dbReference>
<dbReference type="EMBL" id="BC111310">
    <property type="protein sequence ID" value="AAI11311.1"/>
    <property type="molecule type" value="mRNA"/>
</dbReference>
<dbReference type="RefSeq" id="NP_001014880.1">
    <property type="nucleotide sequence ID" value="NM_001014880.3"/>
</dbReference>
<dbReference type="SMR" id="Q58DN3"/>
<dbReference type="FunCoup" id="Q58DN3">
    <property type="interactions" value="648"/>
</dbReference>
<dbReference type="STRING" id="9913.ENSBTAP00000023198"/>
<dbReference type="GlyCosmos" id="Q58DN3">
    <property type="glycosylation" value="2 sites, No reported glycans"/>
</dbReference>
<dbReference type="GlyGen" id="Q58DN3">
    <property type="glycosylation" value="2 sites"/>
</dbReference>
<dbReference type="PaxDb" id="9913-ENSBTAP00000023198"/>
<dbReference type="GeneID" id="509386"/>
<dbReference type="KEGG" id="bta:509386"/>
<dbReference type="CTD" id="26262"/>
<dbReference type="eggNOG" id="KOG3882">
    <property type="taxonomic scope" value="Eukaryota"/>
</dbReference>
<dbReference type="HOGENOM" id="CLU_055524_0_2_1"/>
<dbReference type="InParanoid" id="Q58DN3"/>
<dbReference type="OrthoDB" id="2014092at2759"/>
<dbReference type="TreeFam" id="TF313002"/>
<dbReference type="Proteomes" id="UP000009136">
    <property type="component" value="Unplaced"/>
</dbReference>
<dbReference type="GO" id="GO:0005886">
    <property type="term" value="C:plasma membrane"/>
    <property type="evidence" value="ECO:0000318"/>
    <property type="project" value="GO_Central"/>
</dbReference>
<dbReference type="GO" id="GO:0051043">
    <property type="term" value="P:regulation of membrane protein ectodomain proteolysis"/>
    <property type="evidence" value="ECO:0000250"/>
    <property type="project" value="UniProtKB"/>
</dbReference>
<dbReference type="CDD" id="cd03159">
    <property type="entry name" value="TM4SF9_like_LEL"/>
    <property type="match status" value="1"/>
</dbReference>
<dbReference type="FunFam" id="1.10.1450.10:FF:000001">
    <property type="entry name" value="Tetraspanin"/>
    <property type="match status" value="1"/>
</dbReference>
<dbReference type="Gene3D" id="1.10.1450.10">
    <property type="entry name" value="Tetraspanin"/>
    <property type="match status" value="1"/>
</dbReference>
<dbReference type="InterPro" id="IPR018499">
    <property type="entry name" value="Tetraspanin/Peripherin"/>
</dbReference>
<dbReference type="InterPro" id="IPR000301">
    <property type="entry name" value="Tetraspanin_animals"/>
</dbReference>
<dbReference type="InterPro" id="IPR018503">
    <property type="entry name" value="Tetraspanin_CS"/>
</dbReference>
<dbReference type="InterPro" id="IPR008952">
    <property type="entry name" value="Tetraspanin_EC2_sf"/>
</dbReference>
<dbReference type="PANTHER" id="PTHR19282">
    <property type="entry name" value="TETRASPANIN"/>
    <property type="match status" value="1"/>
</dbReference>
<dbReference type="PANTHER" id="PTHR19282:SF470">
    <property type="entry name" value="TETRASPANIN-17"/>
    <property type="match status" value="1"/>
</dbReference>
<dbReference type="Pfam" id="PF00335">
    <property type="entry name" value="Tetraspanin"/>
    <property type="match status" value="1"/>
</dbReference>
<dbReference type="PIRSF" id="PIRSF002419">
    <property type="entry name" value="Tetraspanin"/>
    <property type="match status" value="1"/>
</dbReference>
<dbReference type="PRINTS" id="PR00259">
    <property type="entry name" value="TMFOUR"/>
</dbReference>
<dbReference type="SUPFAM" id="SSF48652">
    <property type="entry name" value="Tetraspanin"/>
    <property type="match status" value="1"/>
</dbReference>
<dbReference type="PROSITE" id="PS00421">
    <property type="entry name" value="TM4_1"/>
    <property type="match status" value="1"/>
</dbReference>
<organism>
    <name type="scientific">Bos taurus</name>
    <name type="common">Bovine</name>
    <dbReference type="NCBI Taxonomy" id="9913"/>
    <lineage>
        <taxon>Eukaryota</taxon>
        <taxon>Metazoa</taxon>
        <taxon>Chordata</taxon>
        <taxon>Craniata</taxon>
        <taxon>Vertebrata</taxon>
        <taxon>Euteleostomi</taxon>
        <taxon>Mammalia</taxon>
        <taxon>Eutheria</taxon>
        <taxon>Laurasiatheria</taxon>
        <taxon>Artiodactyla</taxon>
        <taxon>Ruminantia</taxon>
        <taxon>Pecora</taxon>
        <taxon>Bovidae</taxon>
        <taxon>Bovinae</taxon>
        <taxon>Bos</taxon>
    </lineage>
</organism>
<sequence length="270" mass="30262">MPGKHQHFQEPEVGCCGKYFLFGFNIVFWVLGALFLAIGLWAWSEKGVLSNISALTDLGGLDPVWLFVVVGGVMSVLGFAGCIGALRENTFLLKFFSVFLGLIFFLELATGILAFVFKDWIRDQLNLFINNNVKAYRDDIDLQNLIDFAQEYWSCCGARGPNDWNLNIYFNCTDLNPSRERCGVPFSCCVRDPAEDVLNTQCGYDVRLKLELEQQGFIHTKGCVGQFEKWLQDNLIVVAGVFVGIALLQIFGICLAQNLVSDIKAVKANW</sequence>
<reference key="1">
    <citation type="journal article" date="2005" name="BMC Genomics">
        <title>Characterization of 954 bovine full-CDS cDNA sequences.</title>
        <authorList>
            <person name="Harhay G.P."/>
            <person name="Sonstegard T.S."/>
            <person name="Keele J.W."/>
            <person name="Heaton M.P."/>
            <person name="Clawson M.L."/>
            <person name="Snelling W.M."/>
            <person name="Wiedmann R.T."/>
            <person name="Van Tassell C.P."/>
            <person name="Smith T.P.L."/>
        </authorList>
    </citation>
    <scope>NUCLEOTIDE SEQUENCE [LARGE SCALE MRNA]</scope>
</reference>
<reference key="2">
    <citation type="submission" date="2005-12" db="EMBL/GenBank/DDBJ databases">
        <authorList>
            <consortium name="NIH - Mammalian Gene Collection (MGC) project"/>
        </authorList>
    </citation>
    <scope>NUCLEOTIDE SEQUENCE [LARGE SCALE MRNA]</scope>
    <source>
        <strain>Crossbred X Angus</strain>
        <tissue>Liver</tissue>
    </source>
</reference>
<reference key="3">
    <citation type="journal article" date="2012" name="J. Biol. Chem.">
        <title>The TspanC8 subgroup of tetraspanins interacts with A disintegrin and metalloprotease 10 (ADAM10) and regulates its maturation and cell surface expression.</title>
        <authorList>
            <person name="Haining E.J."/>
            <person name="Yang J."/>
            <person name="Bailey R.L."/>
            <person name="Khan K."/>
            <person name="Collier R."/>
            <person name="Tsai S."/>
            <person name="Watson S.P."/>
            <person name="Frampton J."/>
            <person name="Garcia P."/>
            <person name="Tomlinson M.G."/>
        </authorList>
    </citation>
    <scope>INTERACTION WITH ADAM10</scope>
</reference>
<comment type="function">
    <text evidence="2 3">Part of TspanC8 subgroup, composed of 6 members that interact with the transmembrane metalloprotease ADAM10. This interaction is required for ADAM10 exit from the endoplasmic reticulum and for enzymatic maturation and trafficking to the cell surface as well as substrate specificity. Different TspanC8/ADAM10 complexes have distinct substrates (By similarity). Seems to regulate VE-cadherin expression in endothelial cells probably through interaction with ADAM10, promoting leukocyte transmigration (By similarity).</text>
</comment>
<comment type="subunit">
    <text evidence="5">Interacts with ADAM10; the interaction influences ADAM10 substrate specificity, endocytosis and turnover.</text>
</comment>
<comment type="subcellular location">
    <subcellularLocation>
        <location evidence="3">Cell membrane</location>
        <topology evidence="4">Multi-pass membrane protein</topology>
    </subcellularLocation>
</comment>
<comment type="similarity">
    <text evidence="6">Belongs to the tetraspanin (TM4SF) family.</text>
</comment>
<proteinExistence type="evidence at protein level"/>
<keyword id="KW-1003">Cell membrane</keyword>
<keyword id="KW-1015">Disulfide bond</keyword>
<keyword id="KW-0325">Glycoprotein</keyword>
<keyword id="KW-0472">Membrane</keyword>
<keyword id="KW-1185">Reference proteome</keyword>
<keyword id="KW-0812">Transmembrane</keyword>
<keyword id="KW-1133">Transmembrane helix</keyword>
<protein>
    <recommendedName>
        <fullName>Tetraspanin-17</fullName>
        <shortName>Tspan-17</shortName>
    </recommendedName>
</protein>
<accession>Q58DN3</accession>
<name>TSN17_BOVIN</name>
<evidence type="ECO:0000250" key="1">
    <source>
        <dbReference type="UniProtKB" id="O95858"/>
    </source>
</evidence>
<evidence type="ECO:0000250" key="2">
    <source>
        <dbReference type="UniProtKB" id="Q96FV3"/>
    </source>
</evidence>
<evidence type="ECO:0000250" key="3">
    <source>
        <dbReference type="UniProtKB" id="Q9D7W4"/>
    </source>
</evidence>
<evidence type="ECO:0000255" key="4"/>
<evidence type="ECO:0000269" key="5">
    <source>
    </source>
</evidence>
<evidence type="ECO:0000305" key="6"/>